<accession>P65070</accession>
<accession>A0A1R3Y433</accession>
<accession>Q50725</accession>
<accession>X2BNW1</accession>
<sequence length="262" mass="28228">MANWYRPNYPEVRSRVLGLPEKVRACLFDLDGVLTDTASLHTKAWKAMFDAYLAERAERTGEKFVPFDPAADYHTYVDGKKREDGVRSFLSSRAIEIPDGSPDDPGAAETVYGLGNRKNDMLHKLLRDDGAQVFDGSRRYLEAVTAAGLGVAVVSSSANTRDVLATTGLDRFVQQRVDGVTLREEHIAGKPAPDSFLRAAELLGVTPDAAAVFEDALSGVAAGRAGNFAVVVGINRTGRAAQAAQLRRHGADVVVTDLAELL</sequence>
<name>PGMB_MYCBO</name>
<comment type="function">
    <text evidence="2">Catalyzes the interconversion of D-glucose 1-phosphate (G1P) and D-glucose 6-phosphate (G6P), forming beta-D-glucose 1,6-(bis)phosphate (beta-G16P) as an intermediate.</text>
</comment>
<comment type="catalytic activity">
    <reaction evidence="2">
        <text>beta-D-glucose 1-phosphate = beta-D-glucose 6-phosphate</text>
        <dbReference type="Rhea" id="RHEA:20113"/>
        <dbReference type="ChEBI" id="CHEBI:57684"/>
        <dbReference type="ChEBI" id="CHEBI:58247"/>
        <dbReference type="EC" id="5.4.2.6"/>
    </reaction>
</comment>
<comment type="cofactor">
    <cofactor evidence="2">
        <name>Mg(2+)</name>
        <dbReference type="ChEBI" id="CHEBI:18420"/>
    </cofactor>
    <text evidence="1">Binds 1 magnesium ion per subunit.</text>
</comment>
<comment type="subunit">
    <text evidence="2">Monomer.</text>
</comment>
<comment type="PTM">
    <text evidence="1">Autophosphorylated.</text>
</comment>
<comment type="similarity">
    <text evidence="3">Belongs to the HAD-like hydrolase superfamily. CbbY/CbbZ/Gph/YieH family.</text>
</comment>
<evidence type="ECO:0000250" key="1">
    <source>
        <dbReference type="UniProtKB" id="P71447"/>
    </source>
</evidence>
<evidence type="ECO:0000250" key="2">
    <source>
        <dbReference type="UniProtKB" id="P9WKZ7"/>
    </source>
</evidence>
<evidence type="ECO:0000305" key="3"/>
<feature type="chain" id="PRO_0000104120" description="Beta-phosphoglucomutase">
    <location>
        <begin position="1"/>
        <end position="262"/>
    </location>
</feature>
<feature type="active site" description="Nucleophile" evidence="1">
    <location>
        <position position="29"/>
    </location>
</feature>
<feature type="active site" description="Proton donor/acceptor" evidence="1">
    <location>
        <position position="31"/>
    </location>
</feature>
<feature type="binding site" evidence="1">
    <location>
        <position position="29"/>
    </location>
    <ligand>
        <name>Mg(2+)</name>
        <dbReference type="ChEBI" id="CHEBI:18420"/>
    </ligand>
</feature>
<feature type="binding site" evidence="1">
    <location>
        <position position="31"/>
    </location>
    <ligand>
        <name>beta-D-glucose 6-phosphate</name>
        <dbReference type="ChEBI" id="CHEBI:58247"/>
    </ligand>
</feature>
<feature type="binding site" evidence="1">
    <location>
        <position position="31"/>
    </location>
    <ligand>
        <name>Mg(2+)</name>
        <dbReference type="ChEBI" id="CHEBI:18420"/>
    </ligand>
</feature>
<feature type="binding site" evidence="1">
    <location>
        <position position="79"/>
    </location>
    <ligand>
        <name>beta-D-glucose 6-phosphate</name>
        <dbReference type="ChEBI" id="CHEBI:58247"/>
    </ligand>
</feature>
<feature type="binding site" evidence="1">
    <location>
        <position position="82"/>
    </location>
    <ligand>
        <name>beta-D-glucose 6-phosphate</name>
        <dbReference type="ChEBI" id="CHEBI:58247"/>
    </ligand>
</feature>
<feature type="binding site" evidence="1">
    <location>
        <position position="157"/>
    </location>
    <ligand>
        <name>beta-D-glucose 6-phosphate</name>
        <dbReference type="ChEBI" id="CHEBI:58247"/>
    </ligand>
</feature>
<feature type="binding site" evidence="1">
    <location>
        <position position="159"/>
    </location>
    <ligand>
        <name>beta-D-glucose 6-phosphate</name>
        <dbReference type="ChEBI" id="CHEBI:58247"/>
    </ligand>
</feature>
<feature type="binding site" evidence="1">
    <location>
        <position position="215"/>
    </location>
    <ligand>
        <name>Mg(2+)</name>
        <dbReference type="ChEBI" id="CHEBI:18420"/>
    </ligand>
</feature>
<feature type="modified residue" description="4-aspartylphosphate" evidence="1">
    <location>
        <position position="29"/>
    </location>
</feature>
<dbReference type="EC" id="5.4.2.6" evidence="2"/>
<dbReference type="EMBL" id="LT708304">
    <property type="protein sequence ID" value="SIU02062.1"/>
    <property type="molecule type" value="Genomic_DNA"/>
</dbReference>
<dbReference type="RefSeq" id="NP_857074.1">
    <property type="nucleotide sequence ID" value="NC_002945.3"/>
</dbReference>
<dbReference type="RefSeq" id="WP_003417961.1">
    <property type="nucleotide sequence ID" value="NC_002945.4"/>
</dbReference>
<dbReference type="SMR" id="P65070"/>
<dbReference type="KEGG" id="mbo:BQ2027_MB3433"/>
<dbReference type="PATRIC" id="fig|233413.5.peg.3768"/>
<dbReference type="Proteomes" id="UP000001419">
    <property type="component" value="Chromosome"/>
</dbReference>
<dbReference type="GO" id="GO:0016853">
    <property type="term" value="F:isomerase activity"/>
    <property type="evidence" value="ECO:0007669"/>
    <property type="project" value="UniProtKB-KW"/>
</dbReference>
<dbReference type="GO" id="GO:0046872">
    <property type="term" value="F:metal ion binding"/>
    <property type="evidence" value="ECO:0007669"/>
    <property type="project" value="UniProtKB-KW"/>
</dbReference>
<dbReference type="CDD" id="cd07505">
    <property type="entry name" value="HAD_BPGM-like"/>
    <property type="match status" value="1"/>
</dbReference>
<dbReference type="Gene3D" id="3.40.50.1000">
    <property type="entry name" value="HAD superfamily/HAD-like"/>
    <property type="match status" value="1"/>
</dbReference>
<dbReference type="Gene3D" id="1.10.150.240">
    <property type="entry name" value="Putative phosphatase, domain 2"/>
    <property type="match status" value="1"/>
</dbReference>
<dbReference type="InterPro" id="IPR010976">
    <property type="entry name" value="B-phosphoglucomutase_hydrolase"/>
</dbReference>
<dbReference type="InterPro" id="IPR051600">
    <property type="entry name" value="Beta-PGM-like"/>
</dbReference>
<dbReference type="InterPro" id="IPR036412">
    <property type="entry name" value="HAD-like_sf"/>
</dbReference>
<dbReference type="InterPro" id="IPR006439">
    <property type="entry name" value="HAD-SF_hydro_IA"/>
</dbReference>
<dbReference type="InterPro" id="IPR023214">
    <property type="entry name" value="HAD_sf"/>
</dbReference>
<dbReference type="InterPro" id="IPR023198">
    <property type="entry name" value="PGP-like_dom2"/>
</dbReference>
<dbReference type="NCBIfam" id="TIGR01509">
    <property type="entry name" value="HAD-SF-IA-v3"/>
    <property type="match status" value="1"/>
</dbReference>
<dbReference type="NCBIfam" id="TIGR02009">
    <property type="entry name" value="PGMB-YQAB-SF"/>
    <property type="match status" value="1"/>
</dbReference>
<dbReference type="PANTHER" id="PTHR46193">
    <property type="entry name" value="6-PHOSPHOGLUCONATE PHOSPHATASE"/>
    <property type="match status" value="1"/>
</dbReference>
<dbReference type="PANTHER" id="PTHR46193:SF18">
    <property type="entry name" value="HEXITOL PHOSPHATASE B"/>
    <property type="match status" value="1"/>
</dbReference>
<dbReference type="Pfam" id="PF00702">
    <property type="entry name" value="Hydrolase"/>
    <property type="match status" value="1"/>
</dbReference>
<dbReference type="SFLD" id="SFLDG01129">
    <property type="entry name" value="C1.5:_HAD__Beta-PGM__Phosphata"/>
    <property type="match status" value="1"/>
</dbReference>
<dbReference type="SFLD" id="SFLDS00003">
    <property type="entry name" value="Haloacid_Dehalogenase"/>
    <property type="match status" value="1"/>
</dbReference>
<dbReference type="SUPFAM" id="SSF56784">
    <property type="entry name" value="HAD-like"/>
    <property type="match status" value="1"/>
</dbReference>
<keyword id="KW-0119">Carbohydrate metabolism</keyword>
<keyword id="KW-0413">Isomerase</keyword>
<keyword id="KW-0460">Magnesium</keyword>
<keyword id="KW-0479">Metal-binding</keyword>
<keyword id="KW-0597">Phosphoprotein</keyword>
<keyword id="KW-1185">Reference proteome</keyword>
<gene>
    <name type="ordered locus">BQ2027_MB3433</name>
</gene>
<reference key="1">
    <citation type="journal article" date="2003" name="Proc. Natl. Acad. Sci. U.S.A.">
        <title>The complete genome sequence of Mycobacterium bovis.</title>
        <authorList>
            <person name="Garnier T."/>
            <person name="Eiglmeier K."/>
            <person name="Camus J.-C."/>
            <person name="Medina N."/>
            <person name="Mansoor H."/>
            <person name="Pryor M."/>
            <person name="Duthoy S."/>
            <person name="Grondin S."/>
            <person name="Lacroix C."/>
            <person name="Monsempe C."/>
            <person name="Simon S."/>
            <person name="Harris B."/>
            <person name="Atkin R."/>
            <person name="Doggett J."/>
            <person name="Mayes R."/>
            <person name="Keating L."/>
            <person name="Wheeler P.R."/>
            <person name="Parkhill J."/>
            <person name="Barrell B.G."/>
            <person name="Cole S.T."/>
            <person name="Gordon S.V."/>
            <person name="Hewinson R.G."/>
        </authorList>
    </citation>
    <scope>NUCLEOTIDE SEQUENCE [LARGE SCALE GENOMIC DNA]</scope>
    <source>
        <strain>ATCC BAA-935 / AF2122/97</strain>
    </source>
</reference>
<reference key="2">
    <citation type="journal article" date="2017" name="Genome Announc.">
        <title>Updated reference genome sequence and annotation of Mycobacterium bovis AF2122/97.</title>
        <authorList>
            <person name="Malone K.M."/>
            <person name="Farrell D."/>
            <person name="Stuber T.P."/>
            <person name="Schubert O.T."/>
            <person name="Aebersold R."/>
            <person name="Robbe-Austerman S."/>
            <person name="Gordon S.V."/>
        </authorList>
    </citation>
    <scope>NUCLEOTIDE SEQUENCE [LARGE SCALE GENOMIC DNA]</scope>
    <scope>GENOME REANNOTATION</scope>
    <source>
        <strain>ATCC BAA-935 / AF2122/97</strain>
    </source>
</reference>
<protein>
    <recommendedName>
        <fullName evidence="2">Beta-phosphoglucomutase</fullName>
        <shortName evidence="2">Beta-PGM</shortName>
        <ecNumber evidence="2">5.4.2.6</ecNumber>
    </recommendedName>
</protein>
<organism>
    <name type="scientific">Mycobacterium bovis (strain ATCC BAA-935 / AF2122/97)</name>
    <dbReference type="NCBI Taxonomy" id="233413"/>
    <lineage>
        <taxon>Bacteria</taxon>
        <taxon>Bacillati</taxon>
        <taxon>Actinomycetota</taxon>
        <taxon>Actinomycetes</taxon>
        <taxon>Mycobacteriales</taxon>
        <taxon>Mycobacteriaceae</taxon>
        <taxon>Mycobacterium</taxon>
        <taxon>Mycobacterium tuberculosis complex</taxon>
    </lineage>
</organism>
<proteinExistence type="inferred from homology"/>